<gene>
    <name type="ordered locus">TSIB_0711</name>
</gene>
<name>DGGGP_THESM</name>
<accession>C6A2C9</accession>
<reference key="1">
    <citation type="journal article" date="2009" name="Appl. Environ. Microbiol.">
        <title>Metabolic versatility and indigenous origin of the archaeon Thermococcus sibiricus, isolated from a siberian oil reservoir, as revealed by genome analysis.</title>
        <authorList>
            <person name="Mardanov A.V."/>
            <person name="Ravin N.V."/>
            <person name="Svetlitchnyi V.A."/>
            <person name="Beletsky A.V."/>
            <person name="Miroshnichenko M.L."/>
            <person name="Bonch-Osmolovskaya E.A."/>
            <person name="Skryabin K.G."/>
        </authorList>
    </citation>
    <scope>NUCLEOTIDE SEQUENCE [LARGE SCALE GENOMIC DNA]</scope>
    <source>
        <strain>DSM 12597 / MM 739</strain>
    </source>
</reference>
<evidence type="ECO:0000255" key="1">
    <source>
        <dbReference type="HAMAP-Rule" id="MF_01286"/>
    </source>
</evidence>
<sequence length="279" mass="30084">MELKCFIEILRPINCLIAGLVGILGATVALGHLPPIKTSLLIFLVVFLECSWGNIINDYFDYEIDKINRPNRPLPRGALSKNIALVYGISLGGVAILIAYLINFEAFIFALGAYLLMYLYARKLKPQPFIGNLVVATLTGITPIYGAIAVGKIGLAGYLALCAFLVNVAREIFKDIEDIEGDKAQGAKTLPIVWGIESSSKIGVIFSVATIIASLLPVKAGIGLGYFPIIIVDGIILWAAYEVLKNPSPKTAGRVQKKLKIAIYLAVFSFLLGSITKGV</sequence>
<organism>
    <name type="scientific">Thermococcus sibiricus (strain DSM 12597 / MM 739)</name>
    <dbReference type="NCBI Taxonomy" id="604354"/>
    <lineage>
        <taxon>Archaea</taxon>
        <taxon>Methanobacteriati</taxon>
        <taxon>Methanobacteriota</taxon>
        <taxon>Thermococci</taxon>
        <taxon>Thermococcales</taxon>
        <taxon>Thermococcaceae</taxon>
        <taxon>Thermococcus</taxon>
    </lineage>
</organism>
<proteinExistence type="inferred from homology"/>
<comment type="function">
    <text evidence="1">Prenyltransferase that catalyzes the transfer of the geranylgeranyl moiety of geranylgeranyl diphosphate (GGPP) to the C2 hydroxyl of (S)-3-O-geranylgeranylglyceryl phosphate (GGGP). This reaction is the second ether-bond-formation step in the biosynthesis of archaeal membrane lipids.</text>
</comment>
<comment type="catalytic activity">
    <reaction evidence="1">
        <text>sn-3-O-(geranylgeranyl)glycerol 1-phosphate + (2E,6E,10E)-geranylgeranyl diphosphate = 2,3-bis-O-(geranylgeranyl)-sn-glycerol 1-phosphate + diphosphate</text>
        <dbReference type="Rhea" id="RHEA:18109"/>
        <dbReference type="ChEBI" id="CHEBI:33019"/>
        <dbReference type="ChEBI" id="CHEBI:57677"/>
        <dbReference type="ChEBI" id="CHEBI:58756"/>
        <dbReference type="ChEBI" id="CHEBI:58837"/>
        <dbReference type="EC" id="2.5.1.42"/>
    </reaction>
</comment>
<comment type="cofactor">
    <cofactor evidence="1">
        <name>Mg(2+)</name>
        <dbReference type="ChEBI" id="CHEBI:18420"/>
    </cofactor>
</comment>
<comment type="pathway">
    <text evidence="1">Membrane lipid metabolism; glycerophospholipid metabolism.</text>
</comment>
<comment type="subcellular location">
    <subcellularLocation>
        <location evidence="1">Cell membrane</location>
        <topology evidence="1">Multi-pass membrane protein</topology>
    </subcellularLocation>
</comment>
<comment type="similarity">
    <text evidence="1">Belongs to the UbiA prenyltransferase family. DGGGP synthase subfamily.</text>
</comment>
<feature type="chain" id="PRO_1000214211" description="Digeranylgeranylglyceryl phosphate synthase">
    <location>
        <begin position="1"/>
        <end position="279"/>
    </location>
</feature>
<feature type="transmembrane region" description="Helical" evidence="1">
    <location>
        <begin position="16"/>
        <end position="36"/>
    </location>
</feature>
<feature type="transmembrane region" description="Helical" evidence="1">
    <location>
        <begin position="40"/>
        <end position="60"/>
    </location>
</feature>
<feature type="transmembrane region" description="Helical" evidence="1">
    <location>
        <begin position="77"/>
        <end position="99"/>
    </location>
</feature>
<feature type="transmembrane region" description="Helical" evidence="1">
    <location>
        <begin position="104"/>
        <end position="121"/>
    </location>
</feature>
<feature type="transmembrane region" description="Helical" evidence="1">
    <location>
        <begin position="124"/>
        <end position="144"/>
    </location>
</feature>
<feature type="transmembrane region" description="Helical" evidence="1">
    <location>
        <begin position="146"/>
        <end position="166"/>
    </location>
</feature>
<feature type="transmembrane region" description="Helical" evidence="1">
    <location>
        <begin position="192"/>
        <end position="212"/>
    </location>
</feature>
<feature type="transmembrane region" description="Helical" evidence="1">
    <location>
        <begin position="220"/>
        <end position="240"/>
    </location>
</feature>
<feature type="transmembrane region" description="Helical" evidence="1">
    <location>
        <begin position="259"/>
        <end position="279"/>
    </location>
</feature>
<dbReference type="EC" id="2.5.1.42" evidence="1"/>
<dbReference type="EMBL" id="CP001463">
    <property type="protein sequence ID" value="ACS89774.1"/>
    <property type="molecule type" value="Genomic_DNA"/>
</dbReference>
<dbReference type="RefSeq" id="WP_015848994.1">
    <property type="nucleotide sequence ID" value="NC_012883.1"/>
</dbReference>
<dbReference type="SMR" id="C6A2C9"/>
<dbReference type="STRING" id="604354.TSIB_0711"/>
<dbReference type="GeneID" id="8095699"/>
<dbReference type="KEGG" id="tsi:TSIB_0711"/>
<dbReference type="eggNOG" id="arCOG00476">
    <property type="taxonomic scope" value="Archaea"/>
</dbReference>
<dbReference type="HOGENOM" id="CLU_073311_1_1_2"/>
<dbReference type="OrthoDB" id="11851at2157"/>
<dbReference type="UniPathway" id="UPA00940"/>
<dbReference type="Proteomes" id="UP000009079">
    <property type="component" value="Chromosome"/>
</dbReference>
<dbReference type="GO" id="GO:0005886">
    <property type="term" value="C:plasma membrane"/>
    <property type="evidence" value="ECO:0007669"/>
    <property type="project" value="UniProtKB-SubCell"/>
</dbReference>
<dbReference type="GO" id="GO:0047295">
    <property type="term" value="F:geranylgeranylglycerol-phosphate geranylgeranyltransferase activity"/>
    <property type="evidence" value="ECO:0007669"/>
    <property type="project" value="UniProtKB-UniRule"/>
</dbReference>
<dbReference type="GO" id="GO:0000287">
    <property type="term" value="F:magnesium ion binding"/>
    <property type="evidence" value="ECO:0007669"/>
    <property type="project" value="UniProtKB-UniRule"/>
</dbReference>
<dbReference type="GO" id="GO:0046474">
    <property type="term" value="P:glycerophospholipid biosynthetic process"/>
    <property type="evidence" value="ECO:0007669"/>
    <property type="project" value="UniProtKB-UniRule"/>
</dbReference>
<dbReference type="CDD" id="cd13961">
    <property type="entry name" value="PT_UbiA_DGGGPS"/>
    <property type="match status" value="1"/>
</dbReference>
<dbReference type="Gene3D" id="1.10.357.140">
    <property type="entry name" value="UbiA prenyltransferase"/>
    <property type="match status" value="1"/>
</dbReference>
<dbReference type="Gene3D" id="1.20.120.1780">
    <property type="entry name" value="UbiA prenyltransferase"/>
    <property type="match status" value="1"/>
</dbReference>
<dbReference type="HAMAP" id="MF_01286">
    <property type="entry name" value="DGGGP_synth"/>
    <property type="match status" value="1"/>
</dbReference>
<dbReference type="InterPro" id="IPR023547">
    <property type="entry name" value="DGGGP_synth"/>
</dbReference>
<dbReference type="InterPro" id="IPR050475">
    <property type="entry name" value="Prenyltransferase_related"/>
</dbReference>
<dbReference type="InterPro" id="IPR000537">
    <property type="entry name" value="UbiA_prenyltransferase"/>
</dbReference>
<dbReference type="InterPro" id="IPR044878">
    <property type="entry name" value="UbiA_sf"/>
</dbReference>
<dbReference type="NCBIfam" id="NF009522">
    <property type="entry name" value="PRK12883.1"/>
    <property type="match status" value="1"/>
</dbReference>
<dbReference type="PANTHER" id="PTHR42723">
    <property type="entry name" value="CHLOROPHYLL SYNTHASE"/>
    <property type="match status" value="1"/>
</dbReference>
<dbReference type="PANTHER" id="PTHR42723:SF1">
    <property type="entry name" value="CHLOROPHYLL SYNTHASE, CHLOROPLASTIC"/>
    <property type="match status" value="1"/>
</dbReference>
<dbReference type="Pfam" id="PF01040">
    <property type="entry name" value="UbiA"/>
    <property type="match status" value="1"/>
</dbReference>
<keyword id="KW-1003">Cell membrane</keyword>
<keyword id="KW-0444">Lipid biosynthesis</keyword>
<keyword id="KW-0443">Lipid metabolism</keyword>
<keyword id="KW-0460">Magnesium</keyword>
<keyword id="KW-0472">Membrane</keyword>
<keyword id="KW-0594">Phospholipid biosynthesis</keyword>
<keyword id="KW-1208">Phospholipid metabolism</keyword>
<keyword id="KW-1185">Reference proteome</keyword>
<keyword id="KW-0808">Transferase</keyword>
<keyword id="KW-0812">Transmembrane</keyword>
<keyword id="KW-1133">Transmembrane helix</keyword>
<protein>
    <recommendedName>
        <fullName evidence="1">Digeranylgeranylglyceryl phosphate synthase</fullName>
        <shortName evidence="1">DGGGP synthase</shortName>
        <shortName evidence="1">DGGGPS</shortName>
        <ecNumber evidence="1">2.5.1.42</ecNumber>
    </recommendedName>
    <alternativeName>
        <fullName evidence="1">(S)-2,3-di-O-geranylgeranylglyceryl phosphate synthase</fullName>
    </alternativeName>
    <alternativeName>
        <fullName evidence="1">Geranylgeranylglycerol-phosphate geranylgeranyltransferase</fullName>
    </alternativeName>
</protein>